<name>CITG_ECOUT</name>
<feature type="chain" id="PRO_0000255401" description="2-(5''-triphosphoribosyl)-3'-dephosphocoenzyme-A synthase">
    <location>
        <begin position="1"/>
        <end position="292"/>
    </location>
</feature>
<sequence>MSMPATSTKTTKLATSLIDEYALLGWRAMLTEVNLSPKPGLVDRINCGAHKDMALEDFHRSALAIQGWLPRFIEFGACSAEMAPEEVLHGLRPIGMACEGDMFRATAGVNTHKGSIFSLGLLCAAIGRLLQLNQSVTPITICATAASFCRGLTDRELRTNNSQLTAGQRLYQQLGLTGARGEAEAGYPLVINHALPHYLTLLDQGLDPELALLDTLLLLMATNGDTNVASRGGEGGLRWLQREAQTLLNNGGIRTPADLDYLRQFDRECIERNISPGGSADLLILTWFLAQI</sequence>
<evidence type="ECO:0000255" key="1">
    <source>
        <dbReference type="HAMAP-Rule" id="MF_00397"/>
    </source>
</evidence>
<reference key="1">
    <citation type="journal article" date="2006" name="Proc. Natl. Acad. Sci. U.S.A.">
        <title>Identification of genes subject to positive selection in uropathogenic strains of Escherichia coli: a comparative genomics approach.</title>
        <authorList>
            <person name="Chen S.L."/>
            <person name="Hung C.-S."/>
            <person name="Xu J."/>
            <person name="Reigstad C.S."/>
            <person name="Magrini V."/>
            <person name="Sabo A."/>
            <person name="Blasiar D."/>
            <person name="Bieri T."/>
            <person name="Meyer R.R."/>
            <person name="Ozersky P."/>
            <person name="Armstrong J.R."/>
            <person name="Fulton R.S."/>
            <person name="Latreille J.P."/>
            <person name="Spieth J."/>
            <person name="Hooton T.M."/>
            <person name="Mardis E.R."/>
            <person name="Hultgren S.J."/>
            <person name="Gordon J.I."/>
        </authorList>
    </citation>
    <scope>NUCLEOTIDE SEQUENCE [LARGE SCALE GENOMIC DNA]</scope>
    <source>
        <strain>UTI89 / UPEC</strain>
    </source>
</reference>
<protein>
    <recommendedName>
        <fullName evidence="1">2-(5''-triphosphoribosyl)-3'-dephosphocoenzyme-A synthase</fullName>
        <shortName evidence="1">2-(5''-triphosphoribosyl)-3'-dephospho-CoA synthase</shortName>
        <ecNumber evidence="1">2.4.2.52</ecNumber>
    </recommendedName>
</protein>
<organism>
    <name type="scientific">Escherichia coli (strain UTI89 / UPEC)</name>
    <dbReference type="NCBI Taxonomy" id="364106"/>
    <lineage>
        <taxon>Bacteria</taxon>
        <taxon>Pseudomonadati</taxon>
        <taxon>Pseudomonadota</taxon>
        <taxon>Gammaproteobacteria</taxon>
        <taxon>Enterobacterales</taxon>
        <taxon>Enterobacteriaceae</taxon>
        <taxon>Escherichia</taxon>
    </lineage>
</organism>
<proteinExistence type="inferred from homology"/>
<comment type="function">
    <text evidence="1">Catalyzes the formation of 2-(5''-triphosphoribosyl)-3'-dephosphocoenzyme-A, the precursor of the prosthetic group of the holo-acyl carrier protein (gamma chain) of citrate lyase, from ATP and dephospho-CoA.</text>
</comment>
<comment type="catalytic activity">
    <reaction evidence="1">
        <text>3'-dephospho-CoA + ATP = 2'-(5''-triphospho-alpha-D-ribosyl)-3'-dephospho-CoA + adenine</text>
        <dbReference type="Rhea" id="RHEA:15117"/>
        <dbReference type="ChEBI" id="CHEBI:16708"/>
        <dbReference type="ChEBI" id="CHEBI:30616"/>
        <dbReference type="ChEBI" id="CHEBI:57328"/>
        <dbReference type="ChEBI" id="CHEBI:61378"/>
        <dbReference type="EC" id="2.4.2.52"/>
    </reaction>
</comment>
<comment type="similarity">
    <text evidence="1">Belongs to the CitG/MdcB family.</text>
</comment>
<accession>Q1REU9</accession>
<keyword id="KW-0067">ATP-binding</keyword>
<keyword id="KW-0547">Nucleotide-binding</keyword>
<keyword id="KW-0808">Transferase</keyword>
<gene>
    <name evidence="1" type="primary">citG</name>
    <name type="ordered locus">UTI89_C0615</name>
</gene>
<dbReference type="EC" id="2.4.2.52" evidence="1"/>
<dbReference type="EMBL" id="CP000243">
    <property type="protein sequence ID" value="ABE06115.1"/>
    <property type="molecule type" value="Genomic_DNA"/>
</dbReference>
<dbReference type="RefSeq" id="WP_000062481.1">
    <property type="nucleotide sequence ID" value="NZ_CP064825.1"/>
</dbReference>
<dbReference type="KEGG" id="eci:UTI89_C0615"/>
<dbReference type="HOGENOM" id="CLU_056179_1_0_6"/>
<dbReference type="Proteomes" id="UP000001952">
    <property type="component" value="Chromosome"/>
</dbReference>
<dbReference type="GO" id="GO:0005524">
    <property type="term" value="F:ATP binding"/>
    <property type="evidence" value="ECO:0007669"/>
    <property type="project" value="UniProtKB-KW"/>
</dbReference>
<dbReference type="GO" id="GO:0046917">
    <property type="term" value="F:triphosphoribosyl-dephospho-CoA synthase activity"/>
    <property type="evidence" value="ECO:0007669"/>
    <property type="project" value="UniProtKB-UniRule"/>
</dbReference>
<dbReference type="GO" id="GO:0051191">
    <property type="term" value="P:prosthetic group biosynthetic process"/>
    <property type="evidence" value="ECO:0007669"/>
    <property type="project" value="TreeGrafter"/>
</dbReference>
<dbReference type="FunFam" id="1.10.4200.10:FF:000001">
    <property type="entry name" value="Triphosphoribosyl-dephospho-CoA synthase CitG"/>
    <property type="match status" value="1"/>
</dbReference>
<dbReference type="Gene3D" id="1.10.4200.10">
    <property type="entry name" value="Triphosphoribosyl-dephospho-CoA protein"/>
    <property type="match status" value="1"/>
</dbReference>
<dbReference type="HAMAP" id="MF_00397">
    <property type="entry name" value="CitG"/>
    <property type="match status" value="1"/>
</dbReference>
<dbReference type="InterPro" id="IPR002736">
    <property type="entry name" value="CitG"/>
</dbReference>
<dbReference type="InterPro" id="IPR017551">
    <property type="entry name" value="TriPribosyl-deP-CoA_syn_CitG"/>
</dbReference>
<dbReference type="NCBIfam" id="TIGR03125">
    <property type="entry name" value="citrate_citG"/>
    <property type="match status" value="1"/>
</dbReference>
<dbReference type="NCBIfam" id="NF007503">
    <property type="entry name" value="PRK10096.1"/>
    <property type="match status" value="1"/>
</dbReference>
<dbReference type="PANTHER" id="PTHR30201:SF2">
    <property type="entry name" value="2-(5''-TRIPHOSPHORIBOSYL)-3'-DEPHOSPHOCOENZYME-A SYNTHASE"/>
    <property type="match status" value="1"/>
</dbReference>
<dbReference type="PANTHER" id="PTHR30201">
    <property type="entry name" value="TRIPHOSPHORIBOSYL-DEPHOSPHO-COA SYNTHASE"/>
    <property type="match status" value="1"/>
</dbReference>
<dbReference type="Pfam" id="PF01874">
    <property type="entry name" value="CitG"/>
    <property type="match status" value="1"/>
</dbReference>